<proteinExistence type="inferred from homology"/>
<name>DCYD_ECO7I</name>
<protein>
    <recommendedName>
        <fullName evidence="1">D-cysteine desulfhydrase</fullName>
        <ecNumber evidence="1">4.4.1.15</ecNumber>
    </recommendedName>
</protein>
<keyword id="KW-0456">Lyase</keyword>
<keyword id="KW-0663">Pyridoxal phosphate</keyword>
<comment type="function">
    <text evidence="1">Catalyzes the alpha,beta-elimination reaction of D-cysteine and of several D-cysteine derivatives. It could be a defense mechanism against D-cysteine.</text>
</comment>
<comment type="catalytic activity">
    <reaction evidence="1">
        <text>D-cysteine + H2O = hydrogen sulfide + pyruvate + NH4(+) + H(+)</text>
        <dbReference type="Rhea" id="RHEA:11268"/>
        <dbReference type="ChEBI" id="CHEBI:15361"/>
        <dbReference type="ChEBI" id="CHEBI:15377"/>
        <dbReference type="ChEBI" id="CHEBI:15378"/>
        <dbReference type="ChEBI" id="CHEBI:28938"/>
        <dbReference type="ChEBI" id="CHEBI:29919"/>
        <dbReference type="ChEBI" id="CHEBI:35236"/>
        <dbReference type="EC" id="4.4.1.15"/>
    </reaction>
</comment>
<comment type="cofactor">
    <cofactor evidence="1">
        <name>pyridoxal 5'-phosphate</name>
        <dbReference type="ChEBI" id="CHEBI:597326"/>
    </cofactor>
</comment>
<comment type="subunit">
    <text evidence="1">Homodimer.</text>
</comment>
<comment type="similarity">
    <text evidence="1">Belongs to the ACC deaminase/D-cysteine desulfhydrase family.</text>
</comment>
<accession>B7NRG1</accession>
<dbReference type="EC" id="4.4.1.15" evidence="1"/>
<dbReference type="EMBL" id="CU928164">
    <property type="protein sequence ID" value="CAR17270.1"/>
    <property type="molecule type" value="Genomic_DNA"/>
</dbReference>
<dbReference type="RefSeq" id="WP_001128202.1">
    <property type="nucleotide sequence ID" value="NC_011750.1"/>
</dbReference>
<dbReference type="RefSeq" id="YP_002407146.1">
    <property type="nucleotide sequence ID" value="NC_011750.1"/>
</dbReference>
<dbReference type="SMR" id="B7NRG1"/>
<dbReference type="STRING" id="585057.ECIAI39_1136"/>
<dbReference type="KEGG" id="ect:ECIAI39_1136"/>
<dbReference type="PATRIC" id="fig|585057.6.peg.1186"/>
<dbReference type="HOGENOM" id="CLU_048897_1_0_6"/>
<dbReference type="Proteomes" id="UP000000749">
    <property type="component" value="Chromosome"/>
</dbReference>
<dbReference type="GO" id="GO:0019148">
    <property type="term" value="F:D-cysteine desulfhydrase activity"/>
    <property type="evidence" value="ECO:0007669"/>
    <property type="project" value="UniProtKB-UniRule"/>
</dbReference>
<dbReference type="GO" id="GO:0046416">
    <property type="term" value="P:D-amino acid metabolic process"/>
    <property type="evidence" value="ECO:0007669"/>
    <property type="project" value="UniProtKB-UniRule"/>
</dbReference>
<dbReference type="CDD" id="cd06449">
    <property type="entry name" value="ACCD"/>
    <property type="match status" value="1"/>
</dbReference>
<dbReference type="FunFam" id="3.40.50.1100:FF:000019">
    <property type="entry name" value="D-cysteine desulfhydrase"/>
    <property type="match status" value="1"/>
</dbReference>
<dbReference type="Gene3D" id="3.40.50.1100">
    <property type="match status" value="2"/>
</dbReference>
<dbReference type="HAMAP" id="MF_01045">
    <property type="entry name" value="D_Cys_desulfhydr"/>
    <property type="match status" value="1"/>
</dbReference>
<dbReference type="InterPro" id="IPR027278">
    <property type="entry name" value="ACCD_DCysDesulf"/>
</dbReference>
<dbReference type="InterPro" id="IPR005966">
    <property type="entry name" value="D-Cys_desShydrase"/>
</dbReference>
<dbReference type="InterPro" id="IPR023702">
    <property type="entry name" value="D_Cys_desulphydr_bac"/>
</dbReference>
<dbReference type="InterPro" id="IPR001926">
    <property type="entry name" value="TrpB-like_PALP"/>
</dbReference>
<dbReference type="InterPro" id="IPR036052">
    <property type="entry name" value="TrpB-like_PALP_sf"/>
</dbReference>
<dbReference type="NCBIfam" id="TIGR01275">
    <property type="entry name" value="ACC_deam_rel"/>
    <property type="match status" value="1"/>
</dbReference>
<dbReference type="NCBIfam" id="NF003029">
    <property type="entry name" value="PRK03910.1-1"/>
    <property type="match status" value="1"/>
</dbReference>
<dbReference type="NCBIfam" id="NF003030">
    <property type="entry name" value="PRK03910.1-3"/>
    <property type="match status" value="1"/>
</dbReference>
<dbReference type="NCBIfam" id="NF003032">
    <property type="entry name" value="PRK03910.1-5"/>
    <property type="match status" value="1"/>
</dbReference>
<dbReference type="PANTHER" id="PTHR43780">
    <property type="entry name" value="1-AMINOCYCLOPROPANE-1-CARBOXYLATE DEAMINASE-RELATED"/>
    <property type="match status" value="1"/>
</dbReference>
<dbReference type="PANTHER" id="PTHR43780:SF2">
    <property type="entry name" value="1-AMINOCYCLOPROPANE-1-CARBOXYLATE DEAMINASE-RELATED"/>
    <property type="match status" value="1"/>
</dbReference>
<dbReference type="Pfam" id="PF00291">
    <property type="entry name" value="PALP"/>
    <property type="match status" value="1"/>
</dbReference>
<dbReference type="PIRSF" id="PIRSF006278">
    <property type="entry name" value="ACCD_DCysDesulf"/>
    <property type="match status" value="1"/>
</dbReference>
<dbReference type="SUPFAM" id="SSF53686">
    <property type="entry name" value="Tryptophan synthase beta subunit-like PLP-dependent enzymes"/>
    <property type="match status" value="1"/>
</dbReference>
<evidence type="ECO:0000255" key="1">
    <source>
        <dbReference type="HAMAP-Rule" id="MF_01045"/>
    </source>
</evidence>
<sequence>MPLHNLTRFPRLEFIGAPTPLEYLPRFSDYLGREIFIKRDDVIPMAMGGNKLRKLEFLAADALREGADTLITAGAIQSNHVRQTAAVAAKLGLHCVALLENPIGTTAENYLTNGNRLLLDLFNTQIEMCDALTDPNTQLEELATRVEAQGFRPYVIPVGGSNALGALGYVESALEIAQQCEGAVNISSVVVASGSAGTHAGLAVGLEHLMPESELIGVTVSRSVADQLPKVVNLQQAIAKELELTASAEILLWDDYFAPGYGVPNDEGMEAVKLLARLEGILLDPVYTGKAMAGLIDGISQKRFKDEGPILFIHTGGAPALFAYHPHV</sequence>
<reference key="1">
    <citation type="journal article" date="2009" name="PLoS Genet.">
        <title>Organised genome dynamics in the Escherichia coli species results in highly diverse adaptive paths.</title>
        <authorList>
            <person name="Touchon M."/>
            <person name="Hoede C."/>
            <person name="Tenaillon O."/>
            <person name="Barbe V."/>
            <person name="Baeriswyl S."/>
            <person name="Bidet P."/>
            <person name="Bingen E."/>
            <person name="Bonacorsi S."/>
            <person name="Bouchier C."/>
            <person name="Bouvet O."/>
            <person name="Calteau A."/>
            <person name="Chiapello H."/>
            <person name="Clermont O."/>
            <person name="Cruveiller S."/>
            <person name="Danchin A."/>
            <person name="Diard M."/>
            <person name="Dossat C."/>
            <person name="Karoui M.E."/>
            <person name="Frapy E."/>
            <person name="Garry L."/>
            <person name="Ghigo J.M."/>
            <person name="Gilles A.M."/>
            <person name="Johnson J."/>
            <person name="Le Bouguenec C."/>
            <person name="Lescat M."/>
            <person name="Mangenot S."/>
            <person name="Martinez-Jehanne V."/>
            <person name="Matic I."/>
            <person name="Nassif X."/>
            <person name="Oztas S."/>
            <person name="Petit M.A."/>
            <person name="Pichon C."/>
            <person name="Rouy Z."/>
            <person name="Ruf C.S."/>
            <person name="Schneider D."/>
            <person name="Tourret J."/>
            <person name="Vacherie B."/>
            <person name="Vallenet D."/>
            <person name="Medigue C."/>
            <person name="Rocha E.P.C."/>
            <person name="Denamur E."/>
        </authorList>
    </citation>
    <scope>NUCLEOTIDE SEQUENCE [LARGE SCALE GENOMIC DNA]</scope>
    <source>
        <strain>IAI39 / ExPEC</strain>
    </source>
</reference>
<organism>
    <name type="scientific">Escherichia coli O7:K1 (strain IAI39 / ExPEC)</name>
    <dbReference type="NCBI Taxonomy" id="585057"/>
    <lineage>
        <taxon>Bacteria</taxon>
        <taxon>Pseudomonadati</taxon>
        <taxon>Pseudomonadota</taxon>
        <taxon>Gammaproteobacteria</taxon>
        <taxon>Enterobacterales</taxon>
        <taxon>Enterobacteriaceae</taxon>
        <taxon>Escherichia</taxon>
    </lineage>
</organism>
<feature type="chain" id="PRO_1000136158" description="D-cysteine desulfhydrase">
    <location>
        <begin position="1"/>
        <end position="328"/>
    </location>
</feature>
<feature type="modified residue" description="N6-(pyridoxal phosphate)lysine" evidence="1">
    <location>
        <position position="51"/>
    </location>
</feature>
<gene>
    <name evidence="1" type="primary">dcyD</name>
    <name type="ordered locus">ECIAI39_1136</name>
</gene>